<dbReference type="EC" id="3.1.3.48" evidence="1"/>
<dbReference type="EMBL" id="M13158">
    <property type="protein sequence ID" value="AAA35294.1"/>
    <property type="status" value="ALT_FRAME"/>
    <property type="molecule type" value="Genomic_DNA"/>
</dbReference>
<dbReference type="EMBL" id="CU329670">
    <property type="protein sequence ID" value="CAA90849.1"/>
    <property type="molecule type" value="Genomic_DNA"/>
</dbReference>
<dbReference type="PIR" id="S62407">
    <property type="entry name" value="S62407"/>
</dbReference>
<dbReference type="RefSeq" id="NP_592947.1">
    <property type="nucleotide sequence ID" value="NM_001018348.2"/>
</dbReference>
<dbReference type="SMR" id="P06652"/>
<dbReference type="BioGRID" id="279086">
    <property type="interactions" value="96"/>
</dbReference>
<dbReference type="FunCoup" id="P06652">
    <property type="interactions" value="328"/>
</dbReference>
<dbReference type="IntAct" id="P06652">
    <property type="interactions" value="2"/>
</dbReference>
<dbReference type="STRING" id="284812.P06652"/>
<dbReference type="iPTMnet" id="P06652"/>
<dbReference type="PaxDb" id="4896-SPAC24H6.05.1"/>
<dbReference type="EnsemblFungi" id="SPAC24H6.05.1">
    <property type="protein sequence ID" value="SPAC24H6.05.1:pep"/>
    <property type="gene ID" value="SPAC24H6.05"/>
</dbReference>
<dbReference type="PomBase" id="SPAC24H6.05">
    <property type="gene designation" value="cdc25"/>
</dbReference>
<dbReference type="VEuPathDB" id="FungiDB:SPAC24H6.05"/>
<dbReference type="eggNOG" id="KOG3772">
    <property type="taxonomic scope" value="Eukaryota"/>
</dbReference>
<dbReference type="HOGENOM" id="CLU_017900_0_0_1"/>
<dbReference type="InParanoid" id="P06652"/>
<dbReference type="OMA" id="PMNDASH"/>
<dbReference type="PhylomeDB" id="P06652"/>
<dbReference type="Reactome" id="R-SPO-156711">
    <property type="pathway name" value="Polo-like kinase mediated events"/>
</dbReference>
<dbReference type="Reactome" id="R-SPO-176187">
    <property type="pathway name" value="Activation of ATR in response to replication stress"/>
</dbReference>
<dbReference type="Reactome" id="R-SPO-5625740">
    <property type="pathway name" value="RHO GTPases activate PKNs"/>
</dbReference>
<dbReference type="Reactome" id="R-SPO-5689880">
    <property type="pathway name" value="Ub-specific processing proteases"/>
</dbReference>
<dbReference type="Reactome" id="R-SPO-6804115">
    <property type="pathway name" value="TP53 regulates transcription of additional cell cycle genes whose exact role in the p53 pathway remain uncertain"/>
</dbReference>
<dbReference type="Reactome" id="R-SPO-69273">
    <property type="pathway name" value="Cyclin A/B1/B2 associated events during G2/M transition"/>
</dbReference>
<dbReference type="Reactome" id="R-SPO-69601">
    <property type="pathway name" value="Ubiquitin Mediated Degradation of Phosphorylated Cdc25A"/>
</dbReference>
<dbReference type="Reactome" id="R-SPO-69656">
    <property type="pathway name" value="Cyclin A:Cdk2-associated events at S phase entry"/>
</dbReference>
<dbReference type="Reactome" id="R-SPO-75035">
    <property type="pathway name" value="Chk1/Chk2(Cds1) mediated inactivation of Cyclin B:Cdk1 complex"/>
</dbReference>
<dbReference type="PRO" id="PR:P06652"/>
<dbReference type="Proteomes" id="UP000002485">
    <property type="component" value="Chromosome I"/>
</dbReference>
<dbReference type="GO" id="GO:0005737">
    <property type="term" value="C:cytoplasm"/>
    <property type="evidence" value="ECO:0000314"/>
    <property type="project" value="PomBase"/>
</dbReference>
<dbReference type="GO" id="GO:0005829">
    <property type="term" value="C:cytosol"/>
    <property type="evidence" value="ECO:0007005"/>
    <property type="project" value="PomBase"/>
</dbReference>
<dbReference type="GO" id="GO:0005634">
    <property type="term" value="C:nucleus"/>
    <property type="evidence" value="ECO:0000314"/>
    <property type="project" value="PomBase"/>
</dbReference>
<dbReference type="GO" id="GO:0004721">
    <property type="term" value="F:phosphoprotein phosphatase activity"/>
    <property type="evidence" value="ECO:0000314"/>
    <property type="project" value="PomBase"/>
</dbReference>
<dbReference type="GO" id="GO:0004725">
    <property type="term" value="F:protein tyrosine phosphatase activity"/>
    <property type="evidence" value="ECO:0000314"/>
    <property type="project" value="PomBase"/>
</dbReference>
<dbReference type="GO" id="GO:0051301">
    <property type="term" value="P:cell division"/>
    <property type="evidence" value="ECO:0007669"/>
    <property type="project" value="UniProtKB-KW"/>
</dbReference>
<dbReference type="GO" id="GO:0000086">
    <property type="term" value="P:G2/M transition of mitotic cell cycle"/>
    <property type="evidence" value="ECO:0000318"/>
    <property type="project" value="GO_Central"/>
</dbReference>
<dbReference type="GO" id="GO:0031569">
    <property type="term" value="P:mitotic G2 cell size control checkpoint signaling"/>
    <property type="evidence" value="ECO:0000315"/>
    <property type="project" value="PomBase"/>
</dbReference>
<dbReference type="GO" id="GO:0031573">
    <property type="term" value="P:mitotic intra-S DNA damage checkpoint signaling"/>
    <property type="evidence" value="ECO:0000315"/>
    <property type="project" value="PomBase"/>
</dbReference>
<dbReference type="GO" id="GO:0010971">
    <property type="term" value="P:positive regulation of G2/M transition of mitotic cell cycle"/>
    <property type="evidence" value="ECO:0000315"/>
    <property type="project" value="PomBase"/>
</dbReference>
<dbReference type="GO" id="GO:0110032">
    <property type="term" value="P:positive regulation of G2/MI transition of meiotic cell cycle"/>
    <property type="evidence" value="ECO:0000315"/>
    <property type="project" value="PomBase"/>
</dbReference>
<dbReference type="GO" id="GO:0110044">
    <property type="term" value="P:regulation of cell cycle switching, mitotic to meiotic cell cycle"/>
    <property type="evidence" value="ECO:0000315"/>
    <property type="project" value="PomBase"/>
</dbReference>
<dbReference type="GO" id="GO:0008361">
    <property type="term" value="P:regulation of cell size"/>
    <property type="evidence" value="ECO:0000303"/>
    <property type="project" value="PomBase"/>
</dbReference>
<dbReference type="GO" id="GO:0072435">
    <property type="term" value="P:response to mitotic G2 DNA damage checkpoint signaling"/>
    <property type="evidence" value="ECO:0000315"/>
    <property type="project" value="PomBase"/>
</dbReference>
<dbReference type="CDD" id="cd01530">
    <property type="entry name" value="Cdc25"/>
    <property type="match status" value="1"/>
</dbReference>
<dbReference type="FunFam" id="3.40.250.10:FF:000021">
    <property type="entry name" value="M-phase inducer phosphatase cdc-25.2"/>
    <property type="match status" value="1"/>
</dbReference>
<dbReference type="Gene3D" id="3.40.250.10">
    <property type="entry name" value="Rhodanese-like domain"/>
    <property type="match status" value="1"/>
</dbReference>
<dbReference type="InterPro" id="IPR000751">
    <property type="entry name" value="MPI_Phosphatase"/>
</dbReference>
<dbReference type="InterPro" id="IPR001763">
    <property type="entry name" value="Rhodanese-like_dom"/>
</dbReference>
<dbReference type="InterPro" id="IPR036873">
    <property type="entry name" value="Rhodanese-like_dom_sf"/>
</dbReference>
<dbReference type="PANTHER" id="PTHR10828">
    <property type="entry name" value="M-PHASE INDUCER PHOSPHATASE DUAL SPECIFICITY PHOSPHATASE CDC25"/>
    <property type="match status" value="1"/>
</dbReference>
<dbReference type="PANTHER" id="PTHR10828:SF17">
    <property type="entry name" value="PROTEIN-TYROSINE-PHOSPHATASE"/>
    <property type="match status" value="1"/>
</dbReference>
<dbReference type="Pfam" id="PF00581">
    <property type="entry name" value="Rhodanese"/>
    <property type="match status" value="1"/>
</dbReference>
<dbReference type="PRINTS" id="PR00716">
    <property type="entry name" value="MPIPHPHTASE"/>
</dbReference>
<dbReference type="SMART" id="SM00450">
    <property type="entry name" value="RHOD"/>
    <property type="match status" value="1"/>
</dbReference>
<dbReference type="SUPFAM" id="SSF52821">
    <property type="entry name" value="Rhodanese/Cell cycle control phosphatase"/>
    <property type="match status" value="1"/>
</dbReference>
<dbReference type="PROSITE" id="PS50206">
    <property type="entry name" value="RHODANESE_3"/>
    <property type="match status" value="1"/>
</dbReference>
<evidence type="ECO:0000250" key="1">
    <source>
        <dbReference type="UniProtKB" id="P30303"/>
    </source>
</evidence>
<evidence type="ECO:0000250" key="2">
    <source>
        <dbReference type="UniProtKB" id="P30305"/>
    </source>
</evidence>
<evidence type="ECO:0000250" key="3">
    <source>
        <dbReference type="UniProtKB" id="Q16828"/>
    </source>
</evidence>
<evidence type="ECO:0000255" key="4">
    <source>
        <dbReference type="PROSITE-ProRule" id="PRU00173"/>
    </source>
</evidence>
<evidence type="ECO:0000256" key="5">
    <source>
        <dbReference type="SAM" id="MobiDB-lite"/>
    </source>
</evidence>
<evidence type="ECO:0000269" key="6">
    <source>
    </source>
</evidence>
<evidence type="ECO:0000269" key="7">
    <source>
    </source>
</evidence>
<evidence type="ECO:0000269" key="8">
    <source>
    </source>
</evidence>
<evidence type="ECO:0000269" key="9">
    <source ref="3"/>
</evidence>
<evidence type="ECO:0000303" key="10">
    <source>
    </source>
</evidence>
<evidence type="ECO:0000305" key="11"/>
<evidence type="ECO:0000312" key="12">
    <source>
        <dbReference type="PomBase" id="SPAC24H6.05"/>
    </source>
</evidence>
<sequence length="596" mass="66566">MDSPLSSLSFTNTLSGKRNVLRPAARELKLMSDRNANQELDFFFPKSKHIASTLVDPFGKTCSTASPASSLAADMSMNMHIDESPALPTPRRTLFRSLSCTVETPLANKTIVSPLPESPSNDALTESYFFRQPASKYSITQDSPRVSSTIAYSFKPKASIALNTTKSEATRSSLSSSSFDSYLRPNVSRSRSSGNAPPFLRSRSSSSYSINKKKGTSGGQATRHLTYALSRTCSQSSNTTSLLESCLTDDTDDFELMSDHEDTFTMGKVADLPESSVELVEDAASIQRPNSDFGACNDNSLDDLFQASPIKPIDMLPKINKDIAFPSLKVRSPSPMAFAMQEDAEYDEQDTPVLRRTQSMFLNSTRLGLFKSQDLVCVTPKQSTKESERFISSHVEDLSLPCFAVKEDSLKRITQETLLGLLDGKFKDIFDKCIIIDCRFEYEYLGGHISTAVNLNTKQAIVDAFLSKPLTHRVALVFHCEHSAHRAPHLALHFRNTDRRMNSHRYPFLYYPEVYILHGGYKSFYENHKNRCDPINYVPMNDASHVMTCTKAMNNFKRNATFMRTKSYTFGQSVLASPDVNDSPTAMHSLSTLRRF</sequence>
<name>MPIP_SCHPO</name>
<organism>
    <name type="scientific">Schizosaccharomyces pombe (strain 972 / ATCC 24843)</name>
    <name type="common">Fission yeast</name>
    <dbReference type="NCBI Taxonomy" id="284812"/>
    <lineage>
        <taxon>Eukaryota</taxon>
        <taxon>Fungi</taxon>
        <taxon>Dikarya</taxon>
        <taxon>Ascomycota</taxon>
        <taxon>Taphrinomycotina</taxon>
        <taxon>Schizosaccharomycetes</taxon>
        <taxon>Schizosaccharomycetales</taxon>
        <taxon>Schizosaccharomycetaceae</taxon>
        <taxon>Schizosaccharomyces</taxon>
    </lineage>
</organism>
<gene>
    <name evidence="10 12" type="primary">cdc25</name>
    <name evidence="12" type="ORF">SPAC24H6.05</name>
</gene>
<proteinExistence type="evidence at protein level"/>
<protein>
    <recommendedName>
        <fullName>M-phase inducer phosphatase</fullName>
        <ecNumber evidence="1">3.1.3.48</ecNumber>
    </recommendedName>
    <alternativeName>
        <fullName>Mitosis initiation protein</fullName>
    </alternativeName>
    <alternativeName>
        <fullName>P80</fullName>
    </alternativeName>
</protein>
<comment type="function">
    <text evidence="2 6 8 9">Tyrosine protein phosphatase which functions as a dosage-dependent inducer of mitotic and meiotic progression (PubMed:3955656, PubMed:7498766, Ref.3). Directly dephosphorylates cdc2 and stimulates its kinase activity (By similarity). Required for the G2/M transition of the cell cycle (PubMed:15629716). Required for induction of meiosis II (PubMed:7498766, Ref.3).</text>
</comment>
<comment type="catalytic activity">
    <reaction evidence="1">
        <text>O-phospho-L-tyrosyl-[protein] + H2O = L-tyrosyl-[protein] + phosphate</text>
        <dbReference type="Rhea" id="RHEA:10684"/>
        <dbReference type="Rhea" id="RHEA-COMP:10136"/>
        <dbReference type="Rhea" id="RHEA-COMP:20101"/>
        <dbReference type="ChEBI" id="CHEBI:15377"/>
        <dbReference type="ChEBI" id="CHEBI:43474"/>
        <dbReference type="ChEBI" id="CHEBI:46858"/>
        <dbReference type="ChEBI" id="CHEBI:61978"/>
        <dbReference type="EC" id="3.1.3.48"/>
    </reaction>
</comment>
<comment type="subunit">
    <text evidence="6">Interacts with rad24 during G2 in a srk1-dependent manner; the interaction is increased during osmostress.</text>
</comment>
<comment type="subcellular location">
    <subcellularLocation>
        <location evidence="6">Cytoplasm</location>
    </subcellularLocation>
    <subcellularLocation>
        <location evidence="6">Nucleus</location>
    </subcellularLocation>
    <text evidence="6">Accumulates in the nucleus in cycling cells; nuclear localization is the highest in G2.</text>
</comment>
<comment type="PTM">
    <text evidence="6">Phosphorylated by srk1 in the N-terminus; phosphorylation promotes nuclear exclusion.</text>
</comment>
<comment type="similarity">
    <text evidence="11">Belongs to the MPI phosphatase family.</text>
</comment>
<comment type="sequence caution" evidence="11">
    <conflict type="frameshift">
        <sequence resource="EMBL-CDS" id="AAA35294"/>
    </conflict>
</comment>
<feature type="chain" id="PRO_0000198661" description="M-phase inducer phosphatase">
    <location>
        <begin position="1"/>
        <end position="596"/>
    </location>
</feature>
<feature type="domain" description="Rhodanese" evidence="4">
    <location>
        <begin position="429"/>
        <end position="533"/>
    </location>
</feature>
<feature type="region of interest" description="Disordered" evidence="5">
    <location>
        <begin position="174"/>
        <end position="221"/>
    </location>
</feature>
<feature type="active site" description="Phosphocysteine intermediate" evidence="3">
    <location>
        <position position="480"/>
    </location>
</feature>
<feature type="modified residue" description="Phosphoserine" evidence="7">
    <location>
        <position position="99"/>
    </location>
</feature>
<feature type="modified residue" description="Phosphoserine" evidence="7">
    <location>
        <position position="178"/>
    </location>
</feature>
<accession>P06652</accession>
<keyword id="KW-0131">Cell cycle</keyword>
<keyword id="KW-0132">Cell division</keyword>
<keyword id="KW-0963">Cytoplasm</keyword>
<keyword id="KW-0378">Hydrolase</keyword>
<keyword id="KW-0498">Mitosis</keyword>
<keyword id="KW-0539">Nucleus</keyword>
<keyword id="KW-0597">Phosphoprotein</keyword>
<keyword id="KW-0904">Protein phosphatase</keyword>
<keyword id="KW-1185">Reference proteome</keyword>
<reference key="1">
    <citation type="journal article" date="1986" name="Cell">
        <title>cdc25+ functions as an inducer in the mitotic control of fission yeast.</title>
        <authorList>
            <person name="Russell P."/>
            <person name="Nurse P."/>
        </authorList>
    </citation>
    <scope>NUCLEOTIDE SEQUENCE [GENOMIC DNA]</scope>
    <scope>FUNCTION</scope>
</reference>
<reference key="2">
    <citation type="journal article" date="2002" name="Nature">
        <title>The genome sequence of Schizosaccharomyces pombe.</title>
        <authorList>
            <person name="Wood V."/>
            <person name="Gwilliam R."/>
            <person name="Rajandream M.A."/>
            <person name="Lyne M.H."/>
            <person name="Lyne R."/>
            <person name="Stewart A."/>
            <person name="Sgouros J.G."/>
            <person name="Peat N."/>
            <person name="Hayles J."/>
            <person name="Baker S.G."/>
            <person name="Basham D."/>
            <person name="Bowman S."/>
            <person name="Brooks K."/>
            <person name="Brown D."/>
            <person name="Brown S."/>
            <person name="Chillingworth T."/>
            <person name="Churcher C.M."/>
            <person name="Collins M."/>
            <person name="Connor R."/>
            <person name="Cronin A."/>
            <person name="Davis P."/>
            <person name="Feltwell T."/>
            <person name="Fraser A."/>
            <person name="Gentles S."/>
            <person name="Goble A."/>
            <person name="Hamlin N."/>
            <person name="Harris D.E."/>
            <person name="Hidalgo J."/>
            <person name="Hodgson G."/>
            <person name="Holroyd S."/>
            <person name="Hornsby T."/>
            <person name="Howarth S."/>
            <person name="Huckle E.J."/>
            <person name="Hunt S."/>
            <person name="Jagels K."/>
            <person name="James K.D."/>
            <person name="Jones L."/>
            <person name="Jones M."/>
            <person name="Leather S."/>
            <person name="McDonald S."/>
            <person name="McLean J."/>
            <person name="Mooney P."/>
            <person name="Moule S."/>
            <person name="Mungall K.L."/>
            <person name="Murphy L.D."/>
            <person name="Niblett D."/>
            <person name="Odell C."/>
            <person name="Oliver K."/>
            <person name="O'Neil S."/>
            <person name="Pearson D."/>
            <person name="Quail M.A."/>
            <person name="Rabbinowitsch E."/>
            <person name="Rutherford K.M."/>
            <person name="Rutter S."/>
            <person name="Saunders D."/>
            <person name="Seeger K."/>
            <person name="Sharp S."/>
            <person name="Skelton J."/>
            <person name="Simmonds M.N."/>
            <person name="Squares R."/>
            <person name="Squares S."/>
            <person name="Stevens K."/>
            <person name="Taylor K."/>
            <person name="Taylor R.G."/>
            <person name="Tivey A."/>
            <person name="Walsh S.V."/>
            <person name="Warren T."/>
            <person name="Whitehead S."/>
            <person name="Woodward J.R."/>
            <person name="Volckaert G."/>
            <person name="Aert R."/>
            <person name="Robben J."/>
            <person name="Grymonprez B."/>
            <person name="Weltjens I."/>
            <person name="Vanstreels E."/>
            <person name="Rieger M."/>
            <person name="Schaefer M."/>
            <person name="Mueller-Auer S."/>
            <person name="Gabel C."/>
            <person name="Fuchs M."/>
            <person name="Duesterhoeft A."/>
            <person name="Fritzc C."/>
            <person name="Holzer E."/>
            <person name="Moestl D."/>
            <person name="Hilbert H."/>
            <person name="Borzym K."/>
            <person name="Langer I."/>
            <person name="Beck A."/>
            <person name="Lehrach H."/>
            <person name="Reinhardt R."/>
            <person name="Pohl T.M."/>
            <person name="Eger P."/>
            <person name="Zimmermann W."/>
            <person name="Wedler H."/>
            <person name="Wambutt R."/>
            <person name="Purnelle B."/>
            <person name="Goffeau A."/>
            <person name="Cadieu E."/>
            <person name="Dreano S."/>
            <person name="Gloux S."/>
            <person name="Lelaure V."/>
            <person name="Mottier S."/>
            <person name="Galibert F."/>
            <person name="Aves S.J."/>
            <person name="Xiang Z."/>
            <person name="Hunt C."/>
            <person name="Moore K."/>
            <person name="Hurst S.M."/>
            <person name="Lucas M."/>
            <person name="Rochet M."/>
            <person name="Gaillardin C."/>
            <person name="Tallada V.A."/>
            <person name="Garzon A."/>
            <person name="Thode G."/>
            <person name="Daga R.R."/>
            <person name="Cruzado L."/>
            <person name="Jimenez J."/>
            <person name="Sanchez M."/>
            <person name="del Rey F."/>
            <person name="Benito J."/>
            <person name="Dominguez A."/>
            <person name="Revuelta J.L."/>
            <person name="Moreno S."/>
            <person name="Armstrong J."/>
            <person name="Forsburg S.L."/>
            <person name="Cerutti L."/>
            <person name="Lowe T."/>
            <person name="McCombie W.R."/>
            <person name="Paulsen I."/>
            <person name="Potashkin J."/>
            <person name="Shpakovski G.V."/>
            <person name="Ussery D."/>
            <person name="Barrell B.G."/>
            <person name="Nurse P."/>
        </authorList>
    </citation>
    <scope>NUCLEOTIDE SEQUENCE [LARGE SCALE GENOMIC DNA]</scope>
    <source>
        <strain>972 / ATCC 24843</strain>
    </source>
</reference>
<reference key="3">
    <citation type="journal article" date="1989" name="Curr. Genet.">
        <title>Initiation of the second meiotic division in Schizosaccharomyces pombe shares common functions with that of mitosis.</title>
        <authorList>
            <person name="Grallert B."/>
            <person name="Sipiczki M."/>
        </authorList>
    </citation>
    <scope>FUNCTION</scope>
</reference>
<reference key="4">
    <citation type="journal article" date="1995" name="Genetics">
        <title>The role of cdc2 and other genes in meiosis in Schizosaccharomyces pombe.</title>
        <authorList>
            <person name="Iino Y."/>
            <person name="Hiramine Y."/>
            <person name="Yamamoto M."/>
        </authorList>
    </citation>
    <scope>FUNCTION</scope>
</reference>
<reference key="5">
    <citation type="journal article" date="2005" name="Mol. Cell">
        <title>Inactivation of the Cdc25 phosphatase by the stress-activated Srk1 kinase in fission yeast.</title>
        <authorList>
            <person name="Lopez-Aviles S."/>
            <person name="Grande M."/>
            <person name="Gonzalez M."/>
            <person name="Helgesen A.L."/>
            <person name="Alemany V."/>
            <person name="Sanchez-Piris M."/>
            <person name="Bachs O."/>
            <person name="Millar J.B."/>
            <person name="Aligue R."/>
        </authorList>
    </citation>
    <scope>FUNCTION</scope>
    <scope>SUBCELLULAR LOCATION</scope>
    <scope>INTERACTION WITH RAD24</scope>
    <scope>PHOSPHORYLATION</scope>
</reference>
<reference key="6">
    <citation type="journal article" date="2008" name="J. Proteome Res.">
        <title>Phosphoproteome analysis of fission yeast.</title>
        <authorList>
            <person name="Wilson-Grady J.T."/>
            <person name="Villen J."/>
            <person name="Gygi S.P."/>
        </authorList>
    </citation>
    <scope>PHOSPHORYLATION [LARGE SCALE ANALYSIS] AT SER-99 AND SER-178</scope>
    <scope>IDENTIFICATION BY MASS SPECTROMETRY</scope>
</reference>